<protein>
    <recommendedName>
        <fullName evidence="8">Phospholipase D zeta 1</fullName>
        <shortName evidence="8">PLDzeta1</shortName>
        <ecNumber evidence="4">3.1.4.4</ecNumber>
    </recommendedName>
    <alternativeName>
        <fullName>Phospholipase D p1</fullName>
        <shortName>AtPLDp1</shortName>
    </alternativeName>
    <alternativeName>
        <fullName>Phospholipase D1 PHOX and PX-containing domain protein</fullName>
    </alternativeName>
</protein>
<feature type="initiator methionine" description="Removed" evidence="12">
    <location>
        <position position="1"/>
    </location>
</feature>
<feature type="chain" id="PRO_0000218818" description="Phospholipase D zeta 1">
    <location>
        <begin position="2"/>
        <end position="1096"/>
    </location>
</feature>
<feature type="domain" description="PX">
    <location>
        <begin position="50"/>
        <end position="204"/>
    </location>
</feature>
<feature type="domain" description="PH" evidence="1">
    <location>
        <begin position="234"/>
        <end position="342"/>
    </location>
</feature>
<feature type="domain" description="PLD phosphodiesterase 1" evidence="2">
    <location>
        <begin position="477"/>
        <end position="504"/>
    </location>
</feature>
<feature type="domain" description="PLD phosphodiesterase 2" evidence="2">
    <location>
        <begin position="892"/>
        <end position="919"/>
    </location>
</feature>
<feature type="region of interest" description="Disordered" evidence="3">
    <location>
        <begin position="131"/>
        <end position="152"/>
    </location>
</feature>
<feature type="region of interest" description="Disordered" evidence="3">
    <location>
        <begin position="607"/>
        <end position="691"/>
    </location>
</feature>
<feature type="compositionally biased region" description="Basic and acidic residues" evidence="3">
    <location>
        <begin position="139"/>
        <end position="151"/>
    </location>
</feature>
<feature type="compositionally biased region" description="Basic and acidic residues" evidence="3">
    <location>
        <begin position="607"/>
        <end position="632"/>
    </location>
</feature>
<feature type="active site" evidence="2">
    <location>
        <position position="482"/>
    </location>
</feature>
<feature type="active site" evidence="2">
    <location>
        <position position="484"/>
    </location>
</feature>
<feature type="active site" evidence="2">
    <location>
        <position position="489"/>
    </location>
</feature>
<feature type="active site" evidence="2">
    <location>
        <position position="897"/>
    </location>
</feature>
<feature type="active site" evidence="2">
    <location>
        <position position="899"/>
    </location>
</feature>
<feature type="active site" evidence="2">
    <location>
        <position position="904"/>
    </location>
</feature>
<feature type="modified residue" description="N-acetylalanine" evidence="12">
    <location>
        <position position="2"/>
    </location>
</feature>
<gene>
    <name evidence="8" type="primary">PLDZETA1</name>
    <name type="synonym">PLDP1</name>
    <name evidence="10" type="ordered locus">At3g16785</name>
    <name evidence="11" type="ORF">K20I9.1</name>
    <name type="ORF">MGL6.26</name>
</gene>
<keyword id="KW-0007">Acetylation</keyword>
<keyword id="KW-0968">Cytoplasmic vesicle</keyword>
<keyword id="KW-0378">Hydrolase</keyword>
<keyword id="KW-0442">Lipid degradation</keyword>
<keyword id="KW-0443">Lipid metabolism</keyword>
<keyword id="KW-1185">Reference proteome</keyword>
<keyword id="KW-0677">Repeat</keyword>
<comment type="function">
    <text evidence="4 5 6 7">Hydrolyzes glycerol-phospholipids at the terminal phosphodiesteric bond to generate phosphatidic acids (PA). Phosphatidylcholine-selective (PubMed:11891260). Regulates root-hair morphogenesis (PubMed:12775839). Contributes to the supply of inorganic phosphorus for cell metabolism and diacylglycerol moieties for galactolipid synthesis in phosphorus-starved roots (PubMed:16891548). Involved in root elongation during phosphate limitation (PubMed:16384909).</text>
</comment>
<comment type="catalytic activity">
    <reaction evidence="4">
        <text>a 1,2-diacyl-sn-glycero-3-phosphocholine + H2O = a 1,2-diacyl-sn-glycero-3-phosphate + choline + H(+)</text>
        <dbReference type="Rhea" id="RHEA:14445"/>
        <dbReference type="ChEBI" id="CHEBI:15354"/>
        <dbReference type="ChEBI" id="CHEBI:15377"/>
        <dbReference type="ChEBI" id="CHEBI:15378"/>
        <dbReference type="ChEBI" id="CHEBI:57643"/>
        <dbReference type="ChEBI" id="CHEBI:58608"/>
        <dbReference type="EC" id="3.1.4.4"/>
    </reaction>
</comment>
<comment type="cofactor">
    <text evidence="4">Does not require Ca(2+) or any other cation for activity.</text>
</comment>
<comment type="activity regulation">
    <text evidence="4">Calcium-independent and PIP2-dependent.</text>
</comment>
<comment type="biophysicochemical properties">
    <phDependence>
        <text evidence="4">Optimum pH is 7.0.</text>
    </phDependence>
</comment>
<comment type="subcellular location">
    <subcellularLocation>
        <location evidence="5">Cytoplasmic vesicle</location>
    </subcellularLocation>
</comment>
<comment type="tissue specificity">
    <text evidence="6">Expressed in inflorescences, flowers, siliques, stems, leaves, and roots. Highest expression in roots.</text>
</comment>
<comment type="induction">
    <text evidence="5 6">Transcriptionally regulated by GL2 (PubMed:12775839). Up-regulated by phosphate limitation (PubMed:16384909).</text>
</comment>
<comment type="disruption phenotype">
    <text evidence="6 7">No visible phenotype when grown under normal conditions (PubMed:16384909). No effect on root hair patterning or root hair growth (PubMed:16384909). No effect on the concentration of phospholipids and galactolipids in phosphorus-starved roots (PubMed:16891548). Pldzeta1 and pldzeta2 double mutants show a smaller decrease in phosphatidylcholine and a smaller increase in digalactosyldiacylglycerol in phosphorus-starved roots (PubMed:16891548). Pldzeta1 and pldzeta2 double mutants show reduced primary root elongation and increased lateral root elongation under low-phosphate conditions (PubMed:16384909).</text>
</comment>
<comment type="similarity">
    <text evidence="9">Belongs to the phospholipase D family. PXPH-PLD subfamily.</text>
</comment>
<accession>Q9LRZ5</accession>
<name>PLDZ1_ARATH</name>
<dbReference type="EC" id="3.1.4.4" evidence="4"/>
<dbReference type="EMBL" id="AF411833">
    <property type="protein sequence ID" value="AAL06337.1"/>
    <property type="molecule type" value="mRNA"/>
</dbReference>
<dbReference type="EMBL" id="AB028608">
    <property type="protein sequence ID" value="BAA95772.2"/>
    <property type="molecule type" value="Genomic_DNA"/>
</dbReference>
<dbReference type="EMBL" id="AB022217">
    <property type="protein sequence ID" value="BAA95772.2"/>
    <property type="status" value="JOINED"/>
    <property type="molecule type" value="Genomic_DNA"/>
</dbReference>
<dbReference type="EMBL" id="CP002686">
    <property type="protein sequence ID" value="AEE75865.1"/>
    <property type="molecule type" value="Genomic_DNA"/>
</dbReference>
<dbReference type="RefSeq" id="NP_188302.2">
    <property type="nucleotide sequence ID" value="NM_112553.4"/>
</dbReference>
<dbReference type="SMR" id="Q9LRZ5"/>
<dbReference type="FunCoup" id="Q9LRZ5">
    <property type="interactions" value="3616"/>
</dbReference>
<dbReference type="STRING" id="3702.Q9LRZ5"/>
<dbReference type="GlyGen" id="Q9LRZ5">
    <property type="glycosylation" value="1 site"/>
</dbReference>
<dbReference type="iPTMnet" id="Q9LRZ5"/>
<dbReference type="PaxDb" id="3702-AT3G16785.1"/>
<dbReference type="ProteomicsDB" id="235038"/>
<dbReference type="EnsemblPlants" id="AT3G16785.1">
    <property type="protein sequence ID" value="AT3G16785.1"/>
    <property type="gene ID" value="AT3G16785"/>
</dbReference>
<dbReference type="GeneID" id="820932"/>
<dbReference type="Gramene" id="AT3G16785.1">
    <property type="protein sequence ID" value="AT3G16785.1"/>
    <property type="gene ID" value="AT3G16785"/>
</dbReference>
<dbReference type="KEGG" id="ath:AT3G16785"/>
<dbReference type="Araport" id="AT3G16785"/>
<dbReference type="TAIR" id="AT3G16785">
    <property type="gene designation" value="PLDP1"/>
</dbReference>
<dbReference type="eggNOG" id="KOG1329">
    <property type="taxonomic scope" value="Eukaryota"/>
</dbReference>
<dbReference type="HOGENOM" id="CLU_000690_2_0_1"/>
<dbReference type="InParanoid" id="Q9LRZ5"/>
<dbReference type="OMA" id="EWRLDQI"/>
<dbReference type="PhylomeDB" id="Q9LRZ5"/>
<dbReference type="BioCyc" id="ARA:AT3G16785-MONOMER"/>
<dbReference type="BioCyc" id="MetaCyc:AT3G16785-MONOMER"/>
<dbReference type="BRENDA" id="3.1.4.4">
    <property type="organism ID" value="399"/>
</dbReference>
<dbReference type="PRO" id="PR:Q9LRZ5"/>
<dbReference type="Proteomes" id="UP000006548">
    <property type="component" value="Chromosome 3"/>
</dbReference>
<dbReference type="ExpressionAtlas" id="Q9LRZ5">
    <property type="expression patterns" value="baseline and differential"/>
</dbReference>
<dbReference type="GO" id="GO:0031410">
    <property type="term" value="C:cytoplasmic vesicle"/>
    <property type="evidence" value="ECO:0007669"/>
    <property type="project" value="UniProtKB-KW"/>
</dbReference>
<dbReference type="GO" id="GO:0004630">
    <property type="term" value="F:phospholipase D activity"/>
    <property type="evidence" value="ECO:0000314"/>
    <property type="project" value="TAIR"/>
</dbReference>
<dbReference type="GO" id="GO:0035556">
    <property type="term" value="P:intracellular signal transduction"/>
    <property type="evidence" value="ECO:0007669"/>
    <property type="project" value="InterPro"/>
</dbReference>
<dbReference type="GO" id="GO:0008610">
    <property type="term" value="P:lipid biosynthetic process"/>
    <property type="evidence" value="ECO:0000314"/>
    <property type="project" value="TAIR"/>
</dbReference>
<dbReference type="GO" id="GO:0016042">
    <property type="term" value="P:lipid catabolic process"/>
    <property type="evidence" value="ECO:0007669"/>
    <property type="project" value="UniProtKB-KW"/>
</dbReference>
<dbReference type="GO" id="GO:0006654">
    <property type="term" value="P:phosphatidic acid biosynthetic process"/>
    <property type="evidence" value="ECO:0007669"/>
    <property type="project" value="InterPro"/>
</dbReference>
<dbReference type="GO" id="GO:0048364">
    <property type="term" value="P:root development"/>
    <property type="evidence" value="ECO:0000316"/>
    <property type="project" value="TAIR"/>
</dbReference>
<dbReference type="CDD" id="cd01254">
    <property type="entry name" value="PH_PLD"/>
    <property type="match status" value="1"/>
</dbReference>
<dbReference type="CDD" id="cd09138">
    <property type="entry name" value="PLDc_vPLD1_2_yPLD_like_1"/>
    <property type="match status" value="1"/>
</dbReference>
<dbReference type="CDD" id="cd09141">
    <property type="entry name" value="PLDc_vPLD1_2_yPLD_like_2"/>
    <property type="match status" value="1"/>
</dbReference>
<dbReference type="FunFam" id="2.30.29.30:FF:000497">
    <property type="entry name" value="Phospholipase"/>
    <property type="match status" value="1"/>
</dbReference>
<dbReference type="FunFam" id="3.30.870.10:FF:000011">
    <property type="entry name" value="Phospholipase"/>
    <property type="match status" value="1"/>
</dbReference>
<dbReference type="Gene3D" id="3.30.870.10">
    <property type="entry name" value="Endonuclease Chain A"/>
    <property type="match status" value="2"/>
</dbReference>
<dbReference type="Gene3D" id="2.30.29.30">
    <property type="entry name" value="Pleckstrin-homology domain (PH domain)/Phosphotyrosine-binding domain (PTB)"/>
    <property type="match status" value="1"/>
</dbReference>
<dbReference type="InterPro" id="IPR011993">
    <property type="entry name" value="PH-like_dom_sf"/>
</dbReference>
<dbReference type="InterPro" id="IPR001849">
    <property type="entry name" value="PH_domain"/>
</dbReference>
<dbReference type="InterPro" id="IPR025202">
    <property type="entry name" value="PLD-like_dom"/>
</dbReference>
<dbReference type="InterPro" id="IPR001736">
    <property type="entry name" value="PLipase_D/transphosphatidylase"/>
</dbReference>
<dbReference type="InterPro" id="IPR016555">
    <property type="entry name" value="PLipase_D_euk"/>
</dbReference>
<dbReference type="InterPro" id="IPR015679">
    <property type="entry name" value="PLipase_D_fam"/>
</dbReference>
<dbReference type="PANTHER" id="PTHR18896:SF76">
    <property type="entry name" value="PHOSPHOLIPASE"/>
    <property type="match status" value="1"/>
</dbReference>
<dbReference type="PANTHER" id="PTHR18896">
    <property type="entry name" value="PHOSPHOLIPASE D"/>
    <property type="match status" value="1"/>
</dbReference>
<dbReference type="Pfam" id="PF00614">
    <property type="entry name" value="PLDc"/>
    <property type="match status" value="1"/>
</dbReference>
<dbReference type="Pfam" id="PF13091">
    <property type="entry name" value="PLDc_2"/>
    <property type="match status" value="1"/>
</dbReference>
<dbReference type="PIRSF" id="PIRSF009376">
    <property type="entry name" value="Phospholipase_D_euk"/>
    <property type="match status" value="1"/>
</dbReference>
<dbReference type="SMART" id="SM00233">
    <property type="entry name" value="PH"/>
    <property type="match status" value="1"/>
</dbReference>
<dbReference type="SMART" id="SM00155">
    <property type="entry name" value="PLDc"/>
    <property type="match status" value="2"/>
</dbReference>
<dbReference type="SUPFAM" id="SSF50729">
    <property type="entry name" value="PH domain-like"/>
    <property type="match status" value="1"/>
</dbReference>
<dbReference type="SUPFAM" id="SSF56024">
    <property type="entry name" value="Phospholipase D/nuclease"/>
    <property type="match status" value="2"/>
</dbReference>
<dbReference type="PROSITE" id="PS50003">
    <property type="entry name" value="PH_DOMAIN"/>
    <property type="match status" value="1"/>
</dbReference>
<dbReference type="PROSITE" id="PS50035">
    <property type="entry name" value="PLD"/>
    <property type="match status" value="2"/>
</dbReference>
<reference key="1">
    <citation type="journal article" date="2002" name="Plant Physiol.">
        <title>The Arabidopsis phospholipase D family. Characterization of a calcium-independent and phosphatidylcholine-selective PLD zeta 1 with distinct regulatory domains.</title>
        <authorList>
            <person name="Qin C."/>
            <person name="Wang X."/>
        </authorList>
    </citation>
    <scope>NUCLEOTIDE SEQUENCE [MRNA]</scope>
    <scope>GENE FAMILY</scope>
    <scope>NOMENCLATURE</scope>
    <scope>FUNCTION</scope>
    <scope>CATALYTIC ACTIVITY</scope>
    <scope>ACTIVITY REGULATION</scope>
    <scope>BIOPHYSICOCHEMICAL PROPERTIES</scope>
</reference>
<reference key="2">
    <citation type="journal article" date="2000" name="DNA Res.">
        <title>Structural analysis of Arabidopsis thaliana chromosome 3. I. Sequence features of the regions of 4,504,864 bp covered by sixty P1 and TAC clones.</title>
        <authorList>
            <person name="Sato S."/>
            <person name="Nakamura Y."/>
            <person name="Kaneko T."/>
            <person name="Katoh T."/>
            <person name="Asamizu E."/>
            <person name="Tabata S."/>
        </authorList>
    </citation>
    <scope>NUCLEOTIDE SEQUENCE [LARGE SCALE GENOMIC DNA]</scope>
    <source>
        <strain>cv. Columbia</strain>
    </source>
</reference>
<reference key="3">
    <citation type="journal article" date="2017" name="Plant J.">
        <title>Araport11: a complete reannotation of the Arabidopsis thaliana reference genome.</title>
        <authorList>
            <person name="Cheng C.Y."/>
            <person name="Krishnakumar V."/>
            <person name="Chan A.P."/>
            <person name="Thibaud-Nissen F."/>
            <person name="Schobel S."/>
            <person name="Town C.D."/>
        </authorList>
    </citation>
    <scope>GENOME REANNOTATION</scope>
    <source>
        <strain>cv. Columbia</strain>
    </source>
</reference>
<reference key="4">
    <citation type="journal article" date="2003" name="Science">
        <title>Modulation of phospholipid signaling by GLABRA2 in root-hair pattern formation.</title>
        <authorList>
            <person name="Ohashi Y."/>
            <person name="Oka A."/>
            <person name="Rodrigues-Pousada R."/>
            <person name="Possenti M."/>
            <person name="Ruberti I."/>
            <person name="Morelli G."/>
            <person name="Aoyama T."/>
        </authorList>
    </citation>
    <scope>FUNCTION</scope>
    <scope>INDUCTION BY GL2</scope>
    <scope>SUBCELLULAR LOCATION</scope>
</reference>
<reference key="5">
    <citation type="journal article" date="2006" name="Plant Physiol.">
        <title>Quantitative profiling of Arabidopsis polar glycerolipids in response to phosphorus starvation. Roles of phospholipases D zeta1 and D zeta2 in phosphatidylcholine hydrolysis and digalactosyldiacylglycerol accumulation in phosphorus-starved plants.</title>
        <authorList>
            <person name="Li M."/>
            <person name="Welti R."/>
            <person name="Wang X."/>
        </authorList>
    </citation>
    <scope>FUNCTION</scope>
    <scope>DISRUPTION PHENOTYPE</scope>
</reference>
<reference key="6">
    <citation type="journal article" date="2006" name="Plant Physiol.">
        <title>Double knockouts of phospholipases Dzeta1 and Dzeta2 in Arabidopsis affect root elongation during phosphate-limited growth but do not affect root hair patterning.</title>
        <authorList>
            <person name="Li M."/>
            <person name="Qin C."/>
            <person name="Welti R."/>
            <person name="Wang X."/>
        </authorList>
    </citation>
    <scope>FUNCTION</scope>
    <scope>TISSUE SPECIFICITY</scope>
    <scope>DISRUPTION PHENOTYPE</scope>
    <scope>INDUCTION BY LOW PHOSPHATE</scope>
</reference>
<reference key="7">
    <citation type="journal article" date="2012" name="Mol. Cell. Proteomics">
        <title>Comparative large-scale characterisation of plant vs. mammal proteins reveals similar and idiosyncratic N-alpha acetylation features.</title>
        <authorList>
            <person name="Bienvenut W.V."/>
            <person name="Sumpton D."/>
            <person name="Martinez A."/>
            <person name="Lilla S."/>
            <person name="Espagne C."/>
            <person name="Meinnel T."/>
            <person name="Giglione C."/>
        </authorList>
    </citation>
    <scope>ACETYLATION [LARGE SCALE ANALYSIS] AT ALA-2</scope>
    <scope>CLEAVAGE OF INITIATOR METHIONINE [LARGE SCALE ANALYSIS]</scope>
    <scope>IDENTIFICATION BY MASS SPECTROMETRY [LARGE SCALE ANALYSIS]</scope>
</reference>
<evidence type="ECO:0000255" key="1">
    <source>
        <dbReference type="PROSITE-ProRule" id="PRU00145"/>
    </source>
</evidence>
<evidence type="ECO:0000255" key="2">
    <source>
        <dbReference type="PROSITE-ProRule" id="PRU00153"/>
    </source>
</evidence>
<evidence type="ECO:0000256" key="3">
    <source>
        <dbReference type="SAM" id="MobiDB-lite"/>
    </source>
</evidence>
<evidence type="ECO:0000269" key="4">
    <source>
    </source>
</evidence>
<evidence type="ECO:0000269" key="5">
    <source>
    </source>
</evidence>
<evidence type="ECO:0000269" key="6">
    <source>
    </source>
</evidence>
<evidence type="ECO:0000269" key="7">
    <source>
    </source>
</evidence>
<evidence type="ECO:0000303" key="8">
    <source>
    </source>
</evidence>
<evidence type="ECO:0000305" key="9"/>
<evidence type="ECO:0000312" key="10">
    <source>
        <dbReference type="Araport" id="AT3G16785"/>
    </source>
</evidence>
<evidence type="ECO:0000312" key="11">
    <source>
        <dbReference type="EMBL" id="BAA95772.2"/>
    </source>
</evidence>
<evidence type="ECO:0007744" key="12">
    <source>
    </source>
</evidence>
<organism>
    <name type="scientific">Arabidopsis thaliana</name>
    <name type="common">Mouse-ear cress</name>
    <dbReference type="NCBI Taxonomy" id="3702"/>
    <lineage>
        <taxon>Eukaryota</taxon>
        <taxon>Viridiplantae</taxon>
        <taxon>Streptophyta</taxon>
        <taxon>Embryophyta</taxon>
        <taxon>Tracheophyta</taxon>
        <taxon>Spermatophyta</taxon>
        <taxon>Magnoliopsida</taxon>
        <taxon>eudicotyledons</taxon>
        <taxon>Gunneridae</taxon>
        <taxon>Pentapetalae</taxon>
        <taxon>rosids</taxon>
        <taxon>malvids</taxon>
        <taxon>Brassicales</taxon>
        <taxon>Brassicaceae</taxon>
        <taxon>Camelineae</taxon>
        <taxon>Arabidopsis</taxon>
    </lineage>
</organism>
<sequence>MASEQLMSPASGGGRYFQMQPEQFPSMVSSLFSFAPAPTQETNRIFEELPKAVIVSVSRPDAGDISPVLLSYTIECQYKQFKWQLVKKASQVFYLHFALKKRAFIEEIHEKQEQVKEWLQNLGIGDHPPVVQDEDADEVPLHQDESAKNRDVPSSAALPVIRPLGRQQSISVRGKHAMQEYLNHFLGNLDIVNSREVCRFLEVSMLSFSPEYGPKLKEDYIMVKHLPKFSKSDDDSNRCCGCCWFCCCNDNWQKVWGVLKPGFLALLEDPFDAKLLDIIVFDVLPVSNGNDGVDISLAVELKDHNPLRHAFKVTSGNRSIRIRAKNSAKVKDWVASINDAALRPPEGWCHPHRFGSYAPPRGLTDDGSQAQWFVDGGAAFAAIAAAIENAKSEIFICGWWVCPELYLRRPFDPHTSSRLDNLLENKAKQGVQIYILIYKEVALALKINSVYSKRRLLGIHENVRVLRYPDHFSSGVYLWSHHEKLVIVDNQVCFIGGLDLCFGRYDTFEHKVGDNPSVTWPGKDYYNPRESEPNTWEDALKDELERKKHPRMPWHDVHCALWGPPCRDVARHFVQRWNYAKRNKAPYEDSIPLLMPQHHMVIPHYMGRQEESDIESKKEEDSIRGIRRDDSFSSRSSLQDIPLLLPHEPVDQDGSSGGHKENGTNNRNGPFSFRKSKIEPVDGDTPMRGFVDDRNGLDLPVAKRGSNAIDSEWWETQDHDYQVGSPDETGQVGPRTSCRCQIIRSVSQWSAGTSQVEESIHSAYRSLIDKAEHFIYIENQFFISGLSGDDTVKNRVLEALYKRILRAHNEKKIFRVVVVIPLLPGFQGGIDDSGAASVRAIMHWQYRTIYRGHNSILTNLYNTIGVKAHDYISFYGLRAYGKLSEDGPVATSQVYVHSKIMIVDDRAALIGSANINDRSLLGSRDSEIGVLIEDTELVDSRMAGKPWKAGKFSSSLRLSLWSEHLGLRTGEIDQIIDPVSDSTYKEIWMATAKTNTMIYQDVFSCVPNDLIHSRMAFRQSLSYWKEKLGHTTIDLGIAPEKLESYHNGDIKRSDPMDRLKAIKGHLVSFPLDFMCKEDLRPVFNESEYYASPQVFH</sequence>
<proteinExistence type="evidence at protein level"/>